<reference key="1">
    <citation type="journal article" date="1992" name="Oncogene">
        <title>Cloning and developmental expression in Xenopus laevis of seven additional members of the Wnt family.</title>
        <authorList>
            <person name="Wolda S.L."/>
            <person name="Moon R.T."/>
        </authorList>
    </citation>
    <scope>NUCLEOTIDE SEQUENCE [MRNA]</scope>
</reference>
<feature type="chain" id="PRO_0000200655" description="Protein Wnt-7c">
    <location>
        <begin position="1" status="less than"/>
        <end position="135" status="greater than"/>
    </location>
</feature>
<feature type="lipid moiety-binding region" description="O-palmitoleoyl serine; by PORCN" evidence="3">
    <location>
        <position position="9"/>
    </location>
</feature>
<feature type="glycosylation site" description="N-linked (GlcNAc...) asparagine" evidence="4">
    <location>
        <position position="62"/>
    </location>
</feature>
<feature type="glycosylation site" description="N-linked (GlcNAc...) asparagine" evidence="4">
    <location>
        <position position="85"/>
    </location>
</feature>
<feature type="glycosylation site" description="N-linked (GlcNAc...) asparagine" evidence="4">
    <location>
        <position position="98"/>
    </location>
</feature>
<feature type="disulfide bond" evidence="2">
    <location>
        <begin position="3"/>
        <end position="17"/>
    </location>
</feature>
<feature type="disulfide bond" evidence="2">
    <location>
        <begin position="5"/>
        <end position="12"/>
    </location>
</feature>
<feature type="disulfide bond" evidence="2">
    <location>
        <begin position="81"/>
        <end position="112"/>
    </location>
</feature>
<feature type="disulfide bond" evidence="2">
    <location>
        <begin position="97"/>
        <end position="107"/>
    </location>
</feature>
<feature type="disulfide bond" evidence="2">
    <location>
        <begin position="134"/>
        <end position="135"/>
    </location>
</feature>
<feature type="non-terminal residue">
    <location>
        <position position="1"/>
    </location>
</feature>
<feature type="non-terminal residue">
    <location>
        <position position="135"/>
    </location>
</feature>
<sequence length="135" mass="15345">QECKCHGVSGSCTLKTCWVTLPHFREVGYALKDKYEQAVMVEAVRGRRHVVPTFLKLKIPQNNSKPAETDLVYVDRSPNFCEKDNATGSIGTYGRFCNRTSTQADSCELLCCGRGYKTFQYTRTGQCHCKFHWCC</sequence>
<protein>
    <recommendedName>
        <fullName>Protein Wnt-7c</fullName>
        <shortName>XWnt-7c</shortName>
    </recommendedName>
</protein>
<evidence type="ECO:0000250" key="1">
    <source>
        <dbReference type="UniProtKB" id="P27467"/>
    </source>
</evidence>
<evidence type="ECO:0000250" key="2">
    <source>
        <dbReference type="UniProtKB" id="P28026"/>
    </source>
</evidence>
<evidence type="ECO:0000250" key="3">
    <source>
        <dbReference type="UniProtKB" id="P56704"/>
    </source>
</evidence>
<evidence type="ECO:0000255" key="4"/>
<evidence type="ECO:0000305" key="5"/>
<organism>
    <name type="scientific">Xenopus laevis</name>
    <name type="common">African clawed frog</name>
    <dbReference type="NCBI Taxonomy" id="8355"/>
    <lineage>
        <taxon>Eukaryota</taxon>
        <taxon>Metazoa</taxon>
        <taxon>Chordata</taxon>
        <taxon>Craniata</taxon>
        <taxon>Vertebrata</taxon>
        <taxon>Euteleostomi</taxon>
        <taxon>Amphibia</taxon>
        <taxon>Batrachia</taxon>
        <taxon>Anura</taxon>
        <taxon>Pipoidea</taxon>
        <taxon>Pipidae</taxon>
        <taxon>Xenopodinae</taxon>
        <taxon>Xenopus</taxon>
        <taxon>Xenopus</taxon>
    </lineage>
</organism>
<proteinExistence type="evidence at transcript level"/>
<dbReference type="EMBL" id="L07535">
    <property type="protein sequence ID" value="AAA49988.1"/>
    <property type="molecule type" value="mRNA"/>
</dbReference>
<dbReference type="PIR" id="I51577">
    <property type="entry name" value="I51577"/>
</dbReference>
<dbReference type="SMR" id="P31290"/>
<dbReference type="GlyCosmos" id="P31290">
    <property type="glycosylation" value="3 sites, No reported glycans"/>
</dbReference>
<dbReference type="Proteomes" id="UP000186698">
    <property type="component" value="Unplaced"/>
</dbReference>
<dbReference type="GO" id="GO:0005615">
    <property type="term" value="C:extracellular space"/>
    <property type="evidence" value="ECO:0000318"/>
    <property type="project" value="GO_Central"/>
</dbReference>
<dbReference type="GO" id="GO:0005125">
    <property type="term" value="F:cytokine activity"/>
    <property type="evidence" value="ECO:0000318"/>
    <property type="project" value="GO_Central"/>
</dbReference>
<dbReference type="GO" id="GO:0005109">
    <property type="term" value="F:frizzled binding"/>
    <property type="evidence" value="ECO:0000318"/>
    <property type="project" value="GO_Central"/>
</dbReference>
<dbReference type="GO" id="GO:0060070">
    <property type="term" value="P:canonical Wnt signaling pathway"/>
    <property type="evidence" value="ECO:0000318"/>
    <property type="project" value="GO_Central"/>
</dbReference>
<dbReference type="GO" id="GO:0045165">
    <property type="term" value="P:cell fate commitment"/>
    <property type="evidence" value="ECO:0000318"/>
    <property type="project" value="GO_Central"/>
</dbReference>
<dbReference type="GO" id="GO:0030182">
    <property type="term" value="P:neuron differentiation"/>
    <property type="evidence" value="ECO:0000318"/>
    <property type="project" value="GO_Central"/>
</dbReference>
<dbReference type="GO" id="GO:0046330">
    <property type="term" value="P:positive regulation of JNK cascade"/>
    <property type="evidence" value="ECO:0000318"/>
    <property type="project" value="GO_Central"/>
</dbReference>
<dbReference type="FunFam" id="3.30.2460.20:FF:000001">
    <property type="entry name" value="Wnt homolog"/>
    <property type="match status" value="1"/>
</dbReference>
<dbReference type="Gene3D" id="3.30.2460.20">
    <property type="match status" value="1"/>
</dbReference>
<dbReference type="InterPro" id="IPR005817">
    <property type="entry name" value="Wnt"/>
</dbReference>
<dbReference type="InterPro" id="IPR043158">
    <property type="entry name" value="Wnt_C"/>
</dbReference>
<dbReference type="InterPro" id="IPR018161">
    <property type="entry name" value="Wnt_CS"/>
</dbReference>
<dbReference type="PANTHER" id="PTHR12027:SF115">
    <property type="entry name" value="PROTEIN WNT"/>
    <property type="match status" value="1"/>
</dbReference>
<dbReference type="PANTHER" id="PTHR12027">
    <property type="entry name" value="WNT RELATED"/>
    <property type="match status" value="1"/>
</dbReference>
<dbReference type="Pfam" id="PF00110">
    <property type="entry name" value="wnt"/>
    <property type="match status" value="1"/>
</dbReference>
<dbReference type="PRINTS" id="PR01349">
    <property type="entry name" value="WNTPROTEIN"/>
</dbReference>
<dbReference type="SMART" id="SM00097">
    <property type="entry name" value="WNT1"/>
    <property type="match status" value="1"/>
</dbReference>
<dbReference type="PROSITE" id="PS00246">
    <property type="entry name" value="WNT1"/>
    <property type="match status" value="1"/>
</dbReference>
<keyword id="KW-0217">Developmental protein</keyword>
<keyword id="KW-1015">Disulfide bond</keyword>
<keyword id="KW-0272">Extracellular matrix</keyword>
<keyword id="KW-0325">Glycoprotein</keyword>
<keyword id="KW-0449">Lipoprotein</keyword>
<keyword id="KW-1185">Reference proteome</keyword>
<keyword id="KW-0964">Secreted</keyword>
<keyword id="KW-0879">Wnt signaling pathway</keyword>
<comment type="function">
    <text>Ligand for members of the frizzled family of seven transmembrane receptors. Probable developmental protein. May be a signaling molecule which affects the development of discrete regions of tissues. Is likely to signal over only few cell diameters.</text>
</comment>
<comment type="subcellular location">
    <subcellularLocation>
        <location>Secreted</location>
        <location>Extracellular space</location>
        <location>Extracellular matrix</location>
    </subcellularLocation>
</comment>
<comment type="PTM">
    <text evidence="1 3">Palmitoleoylation is required for efficient binding to frizzled receptors. Depalmitoleoylation leads to Wnt signaling pathway inhibition.</text>
</comment>
<comment type="similarity">
    <text evidence="5">Belongs to the Wnt family.</text>
</comment>
<accession>P31290</accession>
<name>WNT7C_XENLA</name>
<gene>
    <name type="primary">wnt7c</name>
</gene>